<organismHost>
    <name type="scientific">Enterobacteriaceae</name>
    <dbReference type="NCBI Taxonomy" id="543"/>
</organismHost>
<protein>
    <recommendedName>
        <fullName evidence="3">Probable tape measure protein</fullName>
        <shortName>TMP</shortName>
    </recommendedName>
    <alternativeName>
        <fullName>Gene product 42</fullName>
        <shortName>gp42</shortName>
    </alternativeName>
    <alternativeName>
        <fullName>Gene product Y</fullName>
        <shortName>gpY</shortName>
    </alternativeName>
</protein>
<feature type="chain" id="PRO_0000077836" description="Probable tape measure protein">
    <location>
        <begin position="1"/>
        <end position="690"/>
    </location>
</feature>
<sequence length="690" mass="73596">MTGKRLKASVIIDLNGNLSRRSRQYSNQINALSRSGQSSLRALRMEVVRVSGAIDRMGSLSTRTFRMLSAGALGIAGVGYTANKLFIGAAAQREQQIIAMNSLYHGDKVRAQAMMAWAKQNAKDTTWGLSGVLDEIRSSKGFGMTDEQTKQFITMLQDQGAMHGWDLPTAQGASLQLKQMFARQQITAADANLLTGYGINVYQALADATGTDVKKIRDLGTKGKLGMKSILTVFRTLSEQSKGAQASAMNSWDGMFAQMEANLLEFRIKVANSGPFEEIKNEMRRVLNWHDMADKSGELDALAENIGQKFLTTFRTVKISAQELWRWLKPGKDALAWVDQNIVSLKKLAAVLVSVWLANKALRAGWAVAKPSWQVASYPFKTGRRMWRWMRNRKRGQAGLPVPDAMTSETLLQGIGIQRVFVINWPRGFGDYGSGGGRRVRSGGRMAPLLPRQPLLLSGPQPLALPAPRPVLALPPPGVPVTARPAPLPLPGKSGLLSRLAGSAAGQLVTGTVGKLADAGRAVGGWFSGIGNKLAGSAIGRVVTKGAGALGWMGKGAGRALSRLGGPVMGALQLAPVLMDEQASTHEKAGAIGSTAGAWLGGAVGSLAGPLGTVAGATLGSVAGEYLGGFVTDLYQKWTATDKEPQEQKVNAEASLRVELGEGLRLTSSRVTEDGMGLNIYAGDNYITGW</sequence>
<name>TMP_BPMU</name>
<evidence type="ECO:0000269" key="1">
    <source>
    </source>
</evidence>
<evidence type="ECO:0000269" key="2">
    <source>
    </source>
</evidence>
<evidence type="ECO:0000305" key="3"/>
<keyword id="KW-0002">3D-structure</keyword>
<keyword id="KW-1035">Host cytoplasm</keyword>
<keyword id="KW-0426">Late protein</keyword>
<keyword id="KW-1185">Reference proteome</keyword>
<keyword id="KW-1188">Viral release from host cell</keyword>
<keyword id="KW-1245">Viral tail assembly</keyword>
<dbReference type="EMBL" id="AF083977">
    <property type="protein sequence ID" value="AAF01120.1"/>
    <property type="molecule type" value="Genomic_DNA"/>
</dbReference>
<dbReference type="RefSeq" id="NP_050646.1">
    <property type="nucleotide sequence ID" value="NC_000929.1"/>
</dbReference>
<dbReference type="PDB" id="9KI1">
    <property type="method" value="EM"/>
    <property type="resolution" value="3.30 A"/>
    <property type="chains" value="g/h/i=1-690"/>
</dbReference>
<dbReference type="PDBsum" id="9KI1"/>
<dbReference type="EMDB" id="EMD-62362"/>
<dbReference type="GeneID" id="2636275"/>
<dbReference type="KEGG" id="vg:2636275"/>
<dbReference type="Proteomes" id="UP000002611">
    <property type="component" value="Genome"/>
</dbReference>
<dbReference type="GO" id="GO:0030430">
    <property type="term" value="C:host cell cytoplasm"/>
    <property type="evidence" value="ECO:0007669"/>
    <property type="project" value="UniProtKB-SubCell"/>
</dbReference>
<dbReference type="GO" id="GO:0098003">
    <property type="term" value="P:viral tail assembly"/>
    <property type="evidence" value="ECO:0007669"/>
    <property type="project" value="UniProtKB-KW"/>
</dbReference>
<dbReference type="InterPro" id="IPR053058">
    <property type="entry name" value="Mulikevirus_tape_measure"/>
</dbReference>
<dbReference type="InterPro" id="IPR013491">
    <property type="entry name" value="Tape_meas_N"/>
</dbReference>
<dbReference type="NCBIfam" id="TIGR02675">
    <property type="entry name" value="tape_meas_nterm"/>
    <property type="match status" value="1"/>
</dbReference>
<dbReference type="PANTHER" id="PTHR38812">
    <property type="entry name" value="MU-LIKE PROPHAGE FLUMU PROTEIN GP42"/>
    <property type="match status" value="1"/>
</dbReference>
<dbReference type="PANTHER" id="PTHR38812:SF2">
    <property type="entry name" value="MU-LIKE PROPHAGE FLUMU PROTEIN GP42"/>
    <property type="match status" value="1"/>
</dbReference>
<dbReference type="Pfam" id="PF20155">
    <property type="entry name" value="TMP_3"/>
    <property type="match status" value="1"/>
</dbReference>
<accession>Q9T1V6</accession>
<reference key="1">
    <citation type="journal article" date="2002" name="J. Mol. Biol.">
        <title>Bacteriophage Mu genome sequence: analysis and comparison with Mu-like prophages in Haemophilus, Neisseria and Deinococcus.</title>
        <authorList>
            <person name="Morgan G.J."/>
            <person name="Hatfull G.F."/>
            <person name="Casjens S."/>
            <person name="Hendrix R.W."/>
        </authorList>
    </citation>
    <scope>NUCLEOTIDE SEQUENCE [LARGE SCALE GENOMIC DNA]</scope>
</reference>
<reference key="2">
    <citation type="journal article" date="1985" name="Virology">
        <title>Morphogenetic structures present in lysates of amber mutants of bacteriophage Mu.</title>
        <authorList>
            <person name="Grundy F.J."/>
            <person name="Howe M.M."/>
        </authorList>
    </citation>
    <scope>DISRUPTION PHENOTYPE</scope>
</reference>
<reference key="3">
    <citation type="journal article" date="1993" name="Genetics">
        <title>Mutational analysis of a C-dependent late promoter of bacteriophage Mu.</title>
        <authorList>
            <person name="Chiang L.W."/>
            <person name="Howe M.M."/>
        </authorList>
    </citation>
    <scope>INDUCTION</scope>
</reference>
<reference key="4">
    <citation type="journal article" date="2012" name="Adv. Exp. Med. Biol.">
        <title>Contractile tail machines of bacteriophages.</title>
        <authorList>
            <person name="Leiman P.G."/>
            <person name="Shneider M.M."/>
        </authorList>
    </citation>
    <scope>REVIEW</scope>
</reference>
<proteinExistence type="evidence at protein level"/>
<comment type="function">
    <text evidence="3">Serves as a base for tail tube protein polymerization and acts as a template for tail length determination. Might remain in the tube and be ejected from the tail prior to the DNA during DNA ejection (Potential).</text>
</comment>
<comment type="subcellular location">
    <subcellularLocation>
        <location evidence="3">Host cytoplasm</location>
    </subcellularLocation>
</comment>
<comment type="induction">
    <text evidence="2">Expressed in the late phase of the viral replicative cycle. Expression of late genes is activated by the viral late transcription activator C.</text>
</comment>
<comment type="disruption phenotype">
    <text evidence="1">No tail is synthesized.</text>
</comment>
<comment type="similarity">
    <text evidence="3">Belongs to the Mulikevirus tape measure protein family.</text>
</comment>
<organism>
    <name type="scientific">Escherichia phage Mu</name>
    <name type="common">Bacteriophage Mu</name>
    <dbReference type="NCBI Taxonomy" id="2681603"/>
    <lineage>
        <taxon>Viruses</taxon>
        <taxon>Duplodnaviria</taxon>
        <taxon>Heunggongvirae</taxon>
        <taxon>Uroviricota</taxon>
        <taxon>Caudoviricetes</taxon>
        <taxon>Muvirus</taxon>
        <taxon>Muvirus mu</taxon>
    </lineage>
</organism>
<gene>
    <name type="ordered locus">Mup42</name>
</gene>